<feature type="chain" id="PRO_0000130147" description="Small ribosomal subunit protein uS3">
    <location>
        <begin position="1"/>
        <end position="241"/>
    </location>
</feature>
<feature type="domain" description="KH type-2" evidence="1">
    <location>
        <begin position="39"/>
        <end position="108"/>
    </location>
</feature>
<feature type="region of interest" description="Disordered" evidence="2">
    <location>
        <begin position="215"/>
        <end position="241"/>
    </location>
</feature>
<feature type="compositionally biased region" description="Low complexity" evidence="2">
    <location>
        <begin position="232"/>
        <end position="241"/>
    </location>
</feature>
<gene>
    <name evidence="1" type="primary">rpsC</name>
    <name type="ordered locus">Mfl129</name>
</gene>
<keyword id="KW-1185">Reference proteome</keyword>
<keyword id="KW-0687">Ribonucleoprotein</keyword>
<keyword id="KW-0689">Ribosomal protein</keyword>
<keyword id="KW-0694">RNA-binding</keyword>
<keyword id="KW-0699">rRNA-binding</keyword>
<proteinExistence type="inferred from homology"/>
<organism>
    <name type="scientific">Mesoplasma florum (strain ATCC 33453 / NBRC 100688 / NCTC 11704 / L1)</name>
    <name type="common">Acholeplasma florum</name>
    <dbReference type="NCBI Taxonomy" id="265311"/>
    <lineage>
        <taxon>Bacteria</taxon>
        <taxon>Bacillati</taxon>
        <taxon>Mycoplasmatota</taxon>
        <taxon>Mollicutes</taxon>
        <taxon>Entomoplasmatales</taxon>
        <taxon>Entomoplasmataceae</taxon>
        <taxon>Mesoplasma</taxon>
    </lineage>
</organism>
<sequence>MGQKVSPNVLRLGIVRDWEDTWYAEKDQYVKWLDQDIKIREGVLKLLKDAAVSKIKIERTNSNITLIIRTARPAIVLGQEGKNVSNIATAVQKIAKDRNLKVEVKVIEVKNPDADATLVARWIGEQITNRASFRTVQKLAIRKALKAGVKGIKTSVSGRLGGVEMARTEGYIEGSVPLSTLRADIDYALYEAPTTYGQIGVKVWINHGEVIGGQSQRVSEKAPMNNDRRFNNKNNNRGGRK</sequence>
<accession>P0DJ10</accession>
<accession>P46247</accession>
<accession>Q6F1Y8</accession>
<reference key="1">
    <citation type="submission" date="2004-06" db="EMBL/GenBank/DDBJ databases">
        <authorList>
            <person name="Birren B.W."/>
            <person name="Stange-Thomann N."/>
            <person name="Hafez N."/>
            <person name="DeCaprio D."/>
            <person name="Fisher S."/>
            <person name="Butler J."/>
            <person name="Elkins T."/>
            <person name="Kodira C.D."/>
            <person name="Major J."/>
            <person name="Wang S."/>
            <person name="Nicol R."/>
            <person name="Nusbaum C."/>
        </authorList>
    </citation>
    <scope>NUCLEOTIDE SEQUENCE [LARGE SCALE GENOMIC DNA]</scope>
    <source>
        <strain>ATCC 33453 / NBRC 100688 / NCTC 11704 / L1</strain>
    </source>
</reference>
<name>RS3_MESFL</name>
<dbReference type="EMBL" id="AE017263">
    <property type="protein sequence ID" value="AAT75485.1"/>
    <property type="molecule type" value="Genomic_DNA"/>
</dbReference>
<dbReference type="RefSeq" id="WP_011183026.1">
    <property type="nucleotide sequence ID" value="NC_006055.1"/>
</dbReference>
<dbReference type="RefSeq" id="YP_053369.1">
    <property type="nucleotide sequence ID" value="NC_006055.1"/>
</dbReference>
<dbReference type="SMR" id="P0DJ10"/>
<dbReference type="STRING" id="265311.Mfl129"/>
<dbReference type="PaxDb" id="265311-Mfl129"/>
<dbReference type="EnsemblBacteria" id="AAT75485">
    <property type="protein sequence ID" value="AAT75485"/>
    <property type="gene ID" value="Mfl129"/>
</dbReference>
<dbReference type="GeneID" id="2897803"/>
<dbReference type="KEGG" id="mfl:Mfl129"/>
<dbReference type="PATRIC" id="fig|265311.5.peg.130"/>
<dbReference type="eggNOG" id="COG0092">
    <property type="taxonomic scope" value="Bacteria"/>
</dbReference>
<dbReference type="HOGENOM" id="CLU_058591_0_2_14"/>
<dbReference type="OrthoDB" id="9806396at2"/>
<dbReference type="Proteomes" id="UP000006647">
    <property type="component" value="Chromosome"/>
</dbReference>
<dbReference type="GO" id="GO:0022627">
    <property type="term" value="C:cytosolic small ribosomal subunit"/>
    <property type="evidence" value="ECO:0007669"/>
    <property type="project" value="TreeGrafter"/>
</dbReference>
<dbReference type="GO" id="GO:0003729">
    <property type="term" value="F:mRNA binding"/>
    <property type="evidence" value="ECO:0007669"/>
    <property type="project" value="UniProtKB-UniRule"/>
</dbReference>
<dbReference type="GO" id="GO:0019843">
    <property type="term" value="F:rRNA binding"/>
    <property type="evidence" value="ECO:0007669"/>
    <property type="project" value="UniProtKB-UniRule"/>
</dbReference>
<dbReference type="GO" id="GO:0003735">
    <property type="term" value="F:structural constituent of ribosome"/>
    <property type="evidence" value="ECO:0007669"/>
    <property type="project" value="InterPro"/>
</dbReference>
<dbReference type="GO" id="GO:0006412">
    <property type="term" value="P:translation"/>
    <property type="evidence" value="ECO:0007669"/>
    <property type="project" value="UniProtKB-UniRule"/>
</dbReference>
<dbReference type="CDD" id="cd02412">
    <property type="entry name" value="KH-II_30S_S3"/>
    <property type="match status" value="1"/>
</dbReference>
<dbReference type="FunFam" id="3.30.300.20:FF:000001">
    <property type="entry name" value="30S ribosomal protein S3"/>
    <property type="match status" value="1"/>
</dbReference>
<dbReference type="Gene3D" id="3.30.300.20">
    <property type="match status" value="1"/>
</dbReference>
<dbReference type="Gene3D" id="3.30.1140.32">
    <property type="entry name" value="Ribosomal protein S3, C-terminal domain"/>
    <property type="match status" value="1"/>
</dbReference>
<dbReference type="HAMAP" id="MF_01309_B">
    <property type="entry name" value="Ribosomal_uS3_B"/>
    <property type="match status" value="1"/>
</dbReference>
<dbReference type="InterPro" id="IPR004087">
    <property type="entry name" value="KH_dom"/>
</dbReference>
<dbReference type="InterPro" id="IPR015946">
    <property type="entry name" value="KH_dom-like_a/b"/>
</dbReference>
<dbReference type="InterPro" id="IPR004044">
    <property type="entry name" value="KH_dom_type_2"/>
</dbReference>
<dbReference type="InterPro" id="IPR009019">
    <property type="entry name" value="KH_sf_prok-type"/>
</dbReference>
<dbReference type="InterPro" id="IPR036419">
    <property type="entry name" value="Ribosomal_S3_C_sf"/>
</dbReference>
<dbReference type="InterPro" id="IPR005704">
    <property type="entry name" value="Ribosomal_uS3_bac-typ"/>
</dbReference>
<dbReference type="InterPro" id="IPR001351">
    <property type="entry name" value="Ribosomal_uS3_C"/>
</dbReference>
<dbReference type="InterPro" id="IPR018280">
    <property type="entry name" value="Ribosomal_uS3_CS"/>
</dbReference>
<dbReference type="NCBIfam" id="TIGR01009">
    <property type="entry name" value="rpsC_bact"/>
    <property type="match status" value="1"/>
</dbReference>
<dbReference type="PANTHER" id="PTHR11760">
    <property type="entry name" value="30S/40S RIBOSOMAL PROTEIN S3"/>
    <property type="match status" value="1"/>
</dbReference>
<dbReference type="PANTHER" id="PTHR11760:SF19">
    <property type="entry name" value="SMALL RIBOSOMAL SUBUNIT PROTEIN US3C"/>
    <property type="match status" value="1"/>
</dbReference>
<dbReference type="Pfam" id="PF07650">
    <property type="entry name" value="KH_2"/>
    <property type="match status" value="1"/>
</dbReference>
<dbReference type="Pfam" id="PF00189">
    <property type="entry name" value="Ribosomal_S3_C"/>
    <property type="match status" value="1"/>
</dbReference>
<dbReference type="SMART" id="SM00322">
    <property type="entry name" value="KH"/>
    <property type="match status" value="1"/>
</dbReference>
<dbReference type="SUPFAM" id="SSF54814">
    <property type="entry name" value="Prokaryotic type KH domain (KH-domain type II)"/>
    <property type="match status" value="1"/>
</dbReference>
<dbReference type="SUPFAM" id="SSF54821">
    <property type="entry name" value="Ribosomal protein S3 C-terminal domain"/>
    <property type="match status" value="1"/>
</dbReference>
<dbReference type="PROSITE" id="PS50823">
    <property type="entry name" value="KH_TYPE_2"/>
    <property type="match status" value="1"/>
</dbReference>
<dbReference type="PROSITE" id="PS00548">
    <property type="entry name" value="RIBOSOMAL_S3"/>
    <property type="match status" value="1"/>
</dbReference>
<protein>
    <recommendedName>
        <fullName evidence="1">Small ribosomal subunit protein uS3</fullName>
    </recommendedName>
    <alternativeName>
        <fullName evidence="3">30S ribosomal protein S3</fullName>
    </alternativeName>
</protein>
<evidence type="ECO:0000255" key="1">
    <source>
        <dbReference type="HAMAP-Rule" id="MF_01309"/>
    </source>
</evidence>
<evidence type="ECO:0000256" key="2">
    <source>
        <dbReference type="SAM" id="MobiDB-lite"/>
    </source>
</evidence>
<evidence type="ECO:0000305" key="3"/>
<comment type="function">
    <text evidence="1">Binds the lower part of the 30S subunit head. Binds mRNA in the 70S ribosome, positioning it for translation.</text>
</comment>
<comment type="subunit">
    <text evidence="1">Part of the 30S ribosomal subunit. Forms a tight complex with proteins S10 and S14.</text>
</comment>
<comment type="similarity">
    <text evidence="1">Belongs to the universal ribosomal protein uS3 family.</text>
</comment>